<gene>
    <name type="primary">Lad1</name>
</gene>
<keyword id="KW-0084">Basement membrane</keyword>
<keyword id="KW-0272">Extracellular matrix</keyword>
<keyword id="KW-0597">Phosphoprotein</keyword>
<keyword id="KW-1185">Reference proteome</keyword>
<keyword id="KW-0677">Repeat</keyword>
<keyword id="KW-0964">Secreted</keyword>
<proteinExistence type="evidence at protein level"/>
<reference key="1">
    <citation type="journal article" date="1997" name="Genomics">
        <title>Cloning and chromosomal mapping of mouse ladinin, a novel basement membrane zone component.</title>
        <authorList>
            <person name="Motoki K."/>
            <person name="Megahed M."/>
            <person name="LaForgia S."/>
            <person name="Uitto J."/>
        </authorList>
    </citation>
    <scope>NUCLEOTIDE SEQUENCE [MRNA]</scope>
    <scope>FUNCTION</scope>
    <scope>SUBCELLULAR LOCATION</scope>
    <scope>TISSUE SPECIFICITY</scope>
    <source>
        <strain>C57BL/6J</strain>
        <tissue>Skin</tissue>
    </source>
</reference>
<reference key="2">
    <citation type="journal article" date="2005" name="Science">
        <title>The transcriptional landscape of the mammalian genome.</title>
        <authorList>
            <person name="Carninci P."/>
            <person name="Kasukawa T."/>
            <person name="Katayama S."/>
            <person name="Gough J."/>
            <person name="Frith M.C."/>
            <person name="Maeda N."/>
            <person name="Oyama R."/>
            <person name="Ravasi T."/>
            <person name="Lenhard B."/>
            <person name="Wells C."/>
            <person name="Kodzius R."/>
            <person name="Shimokawa K."/>
            <person name="Bajic V.B."/>
            <person name="Brenner S.E."/>
            <person name="Batalov S."/>
            <person name="Forrest A.R."/>
            <person name="Zavolan M."/>
            <person name="Davis M.J."/>
            <person name="Wilming L.G."/>
            <person name="Aidinis V."/>
            <person name="Allen J.E."/>
            <person name="Ambesi-Impiombato A."/>
            <person name="Apweiler R."/>
            <person name="Aturaliya R.N."/>
            <person name="Bailey T.L."/>
            <person name="Bansal M."/>
            <person name="Baxter L."/>
            <person name="Beisel K.W."/>
            <person name="Bersano T."/>
            <person name="Bono H."/>
            <person name="Chalk A.M."/>
            <person name="Chiu K.P."/>
            <person name="Choudhary V."/>
            <person name="Christoffels A."/>
            <person name="Clutterbuck D.R."/>
            <person name="Crowe M.L."/>
            <person name="Dalla E."/>
            <person name="Dalrymple B.P."/>
            <person name="de Bono B."/>
            <person name="Della Gatta G."/>
            <person name="di Bernardo D."/>
            <person name="Down T."/>
            <person name="Engstrom P."/>
            <person name="Fagiolini M."/>
            <person name="Faulkner G."/>
            <person name="Fletcher C.F."/>
            <person name="Fukushima T."/>
            <person name="Furuno M."/>
            <person name="Futaki S."/>
            <person name="Gariboldi M."/>
            <person name="Georgii-Hemming P."/>
            <person name="Gingeras T.R."/>
            <person name="Gojobori T."/>
            <person name="Green R.E."/>
            <person name="Gustincich S."/>
            <person name="Harbers M."/>
            <person name="Hayashi Y."/>
            <person name="Hensch T.K."/>
            <person name="Hirokawa N."/>
            <person name="Hill D."/>
            <person name="Huminiecki L."/>
            <person name="Iacono M."/>
            <person name="Ikeo K."/>
            <person name="Iwama A."/>
            <person name="Ishikawa T."/>
            <person name="Jakt M."/>
            <person name="Kanapin A."/>
            <person name="Katoh M."/>
            <person name="Kawasawa Y."/>
            <person name="Kelso J."/>
            <person name="Kitamura H."/>
            <person name="Kitano H."/>
            <person name="Kollias G."/>
            <person name="Krishnan S.P."/>
            <person name="Kruger A."/>
            <person name="Kummerfeld S.K."/>
            <person name="Kurochkin I.V."/>
            <person name="Lareau L.F."/>
            <person name="Lazarevic D."/>
            <person name="Lipovich L."/>
            <person name="Liu J."/>
            <person name="Liuni S."/>
            <person name="McWilliam S."/>
            <person name="Madan Babu M."/>
            <person name="Madera M."/>
            <person name="Marchionni L."/>
            <person name="Matsuda H."/>
            <person name="Matsuzawa S."/>
            <person name="Miki H."/>
            <person name="Mignone F."/>
            <person name="Miyake S."/>
            <person name="Morris K."/>
            <person name="Mottagui-Tabar S."/>
            <person name="Mulder N."/>
            <person name="Nakano N."/>
            <person name="Nakauchi H."/>
            <person name="Ng P."/>
            <person name="Nilsson R."/>
            <person name="Nishiguchi S."/>
            <person name="Nishikawa S."/>
            <person name="Nori F."/>
            <person name="Ohara O."/>
            <person name="Okazaki Y."/>
            <person name="Orlando V."/>
            <person name="Pang K.C."/>
            <person name="Pavan W.J."/>
            <person name="Pavesi G."/>
            <person name="Pesole G."/>
            <person name="Petrovsky N."/>
            <person name="Piazza S."/>
            <person name="Reed J."/>
            <person name="Reid J.F."/>
            <person name="Ring B.Z."/>
            <person name="Ringwald M."/>
            <person name="Rost B."/>
            <person name="Ruan Y."/>
            <person name="Salzberg S.L."/>
            <person name="Sandelin A."/>
            <person name="Schneider C."/>
            <person name="Schoenbach C."/>
            <person name="Sekiguchi K."/>
            <person name="Semple C.A."/>
            <person name="Seno S."/>
            <person name="Sessa L."/>
            <person name="Sheng Y."/>
            <person name="Shibata Y."/>
            <person name="Shimada H."/>
            <person name="Shimada K."/>
            <person name="Silva D."/>
            <person name="Sinclair B."/>
            <person name="Sperling S."/>
            <person name="Stupka E."/>
            <person name="Sugiura K."/>
            <person name="Sultana R."/>
            <person name="Takenaka Y."/>
            <person name="Taki K."/>
            <person name="Tammoja K."/>
            <person name="Tan S.L."/>
            <person name="Tang S."/>
            <person name="Taylor M.S."/>
            <person name="Tegner J."/>
            <person name="Teichmann S.A."/>
            <person name="Ueda H.R."/>
            <person name="van Nimwegen E."/>
            <person name="Verardo R."/>
            <person name="Wei C.L."/>
            <person name="Yagi K."/>
            <person name="Yamanishi H."/>
            <person name="Zabarovsky E."/>
            <person name="Zhu S."/>
            <person name="Zimmer A."/>
            <person name="Hide W."/>
            <person name="Bult C."/>
            <person name="Grimmond S.M."/>
            <person name="Teasdale R.D."/>
            <person name="Liu E.T."/>
            <person name="Brusic V."/>
            <person name="Quackenbush J."/>
            <person name="Wahlestedt C."/>
            <person name="Mattick J.S."/>
            <person name="Hume D.A."/>
            <person name="Kai C."/>
            <person name="Sasaki D."/>
            <person name="Tomaru Y."/>
            <person name="Fukuda S."/>
            <person name="Kanamori-Katayama M."/>
            <person name="Suzuki M."/>
            <person name="Aoki J."/>
            <person name="Arakawa T."/>
            <person name="Iida J."/>
            <person name="Imamura K."/>
            <person name="Itoh M."/>
            <person name="Kato T."/>
            <person name="Kawaji H."/>
            <person name="Kawagashira N."/>
            <person name="Kawashima T."/>
            <person name="Kojima M."/>
            <person name="Kondo S."/>
            <person name="Konno H."/>
            <person name="Nakano K."/>
            <person name="Ninomiya N."/>
            <person name="Nishio T."/>
            <person name="Okada M."/>
            <person name="Plessy C."/>
            <person name="Shibata K."/>
            <person name="Shiraki T."/>
            <person name="Suzuki S."/>
            <person name="Tagami M."/>
            <person name="Waki K."/>
            <person name="Watahiki A."/>
            <person name="Okamura-Oho Y."/>
            <person name="Suzuki H."/>
            <person name="Kawai J."/>
            <person name="Hayashizaki Y."/>
        </authorList>
    </citation>
    <scope>NUCLEOTIDE SEQUENCE [LARGE SCALE MRNA]</scope>
    <source>
        <strain>C57BL/6J</strain>
    </source>
</reference>
<reference key="3">
    <citation type="journal article" date="2004" name="Genome Res.">
        <title>The status, quality, and expansion of the NIH full-length cDNA project: the Mammalian Gene Collection (MGC).</title>
        <authorList>
            <consortium name="The MGC Project Team"/>
        </authorList>
    </citation>
    <scope>NUCLEOTIDE SEQUENCE [LARGE SCALE MRNA]</scope>
    <source>
        <strain>FVB/N</strain>
        <tissue>Mammary gland</tissue>
        <tissue>Salivary gland</tissue>
    </source>
</reference>
<reference key="4">
    <citation type="journal article" date="2010" name="Cell">
        <title>A tissue-specific atlas of mouse protein phosphorylation and expression.</title>
        <authorList>
            <person name="Huttlin E.L."/>
            <person name="Jedrychowski M.P."/>
            <person name="Elias J.E."/>
            <person name="Goswami T."/>
            <person name="Rad R."/>
            <person name="Beausoleil S.A."/>
            <person name="Villen J."/>
            <person name="Haas W."/>
            <person name="Sowa M.E."/>
            <person name="Gygi S.P."/>
        </authorList>
    </citation>
    <scope>PHOSPHORYLATION [LARGE SCALE ANALYSIS] AT SER-38; SER-56; SER-62; SER-72; SER-76; SER-328; SER-358 AND SER-367</scope>
    <scope>IDENTIFICATION BY MASS SPECTROMETRY [LARGE SCALE ANALYSIS]</scope>
    <source>
        <tissue>Kidney</tissue>
        <tissue>Lung</tissue>
        <tissue>Pancreas</tissue>
        <tissue>Spleen</tissue>
    </source>
</reference>
<protein>
    <recommendedName>
        <fullName>Ladinin-1</fullName>
        <shortName>Lad-1</shortName>
    </recommendedName>
    <alternativeName>
        <fullName>Linear IgA disease antigen homolog</fullName>
        <shortName>LADA</shortName>
    </alternativeName>
</protein>
<dbReference type="EMBL" id="U58011">
    <property type="protein sequence ID" value="AAC53044.1"/>
    <property type="molecule type" value="mRNA"/>
</dbReference>
<dbReference type="EMBL" id="AK083526">
    <property type="protein sequence ID" value="BAC38941.1"/>
    <property type="molecule type" value="mRNA"/>
</dbReference>
<dbReference type="EMBL" id="BC016257">
    <property type="protein sequence ID" value="AAH16257.1"/>
    <property type="molecule type" value="mRNA"/>
</dbReference>
<dbReference type="EMBL" id="BC031131">
    <property type="protein sequence ID" value="AAH31131.1"/>
    <property type="molecule type" value="mRNA"/>
</dbReference>
<dbReference type="CCDS" id="CCDS35723.1"/>
<dbReference type="RefSeq" id="NP_598425.2">
    <property type="nucleotide sequence ID" value="NM_133664.3"/>
</dbReference>
<dbReference type="BioGRID" id="201090">
    <property type="interactions" value="2"/>
</dbReference>
<dbReference type="FunCoup" id="P57016">
    <property type="interactions" value="58"/>
</dbReference>
<dbReference type="STRING" id="10090.ENSMUSP00000044630"/>
<dbReference type="iPTMnet" id="P57016"/>
<dbReference type="PhosphoSitePlus" id="P57016"/>
<dbReference type="jPOST" id="P57016"/>
<dbReference type="PaxDb" id="10090-ENSMUSP00000044630"/>
<dbReference type="PeptideAtlas" id="P57016"/>
<dbReference type="ProteomicsDB" id="264906"/>
<dbReference type="Antibodypedia" id="20642">
    <property type="antibodies" value="157 antibodies from 27 providers"/>
</dbReference>
<dbReference type="Ensembl" id="ENSMUST00000038760.10">
    <property type="protein sequence ID" value="ENSMUSP00000044630.9"/>
    <property type="gene ID" value="ENSMUSG00000041782.15"/>
</dbReference>
<dbReference type="GeneID" id="16763"/>
<dbReference type="KEGG" id="mmu:16763"/>
<dbReference type="UCSC" id="uc007ctt.1">
    <property type="organism name" value="mouse"/>
</dbReference>
<dbReference type="AGR" id="MGI:109343"/>
<dbReference type="CTD" id="3898"/>
<dbReference type="MGI" id="MGI:109343">
    <property type="gene designation" value="Lad1"/>
</dbReference>
<dbReference type="VEuPathDB" id="HostDB:ENSMUSG00000041782"/>
<dbReference type="eggNOG" id="ENOG502S2ZW">
    <property type="taxonomic scope" value="Eukaryota"/>
</dbReference>
<dbReference type="GeneTree" id="ENSGT00390000005256"/>
<dbReference type="HOGENOM" id="CLU_038228_0_0_1"/>
<dbReference type="InParanoid" id="P57016"/>
<dbReference type="OMA" id="AQASQKW"/>
<dbReference type="OrthoDB" id="9948606at2759"/>
<dbReference type="PhylomeDB" id="P57016"/>
<dbReference type="TreeFam" id="TF335896"/>
<dbReference type="BioGRID-ORCS" id="16763">
    <property type="hits" value="5 hits in 79 CRISPR screens"/>
</dbReference>
<dbReference type="ChiTaRS" id="Lad1">
    <property type="organism name" value="mouse"/>
</dbReference>
<dbReference type="PRO" id="PR:P57016"/>
<dbReference type="Proteomes" id="UP000000589">
    <property type="component" value="Chromosome 1"/>
</dbReference>
<dbReference type="RNAct" id="P57016">
    <property type="molecule type" value="protein"/>
</dbReference>
<dbReference type="Bgee" id="ENSMUSG00000041782">
    <property type="expression patterns" value="Expressed in esophagus and 140 other cell types or tissues"/>
</dbReference>
<dbReference type="GO" id="GO:0015629">
    <property type="term" value="C:actin cytoskeleton"/>
    <property type="evidence" value="ECO:0007669"/>
    <property type="project" value="Ensembl"/>
</dbReference>
<dbReference type="GO" id="GO:0005604">
    <property type="term" value="C:basement membrane"/>
    <property type="evidence" value="ECO:0007669"/>
    <property type="project" value="UniProtKB-SubCell"/>
</dbReference>
<dbReference type="GO" id="GO:0005576">
    <property type="term" value="C:extracellular region"/>
    <property type="evidence" value="ECO:0007669"/>
    <property type="project" value="UniProtKB-KW"/>
</dbReference>
<dbReference type="GO" id="GO:0005198">
    <property type="term" value="F:structural molecule activity"/>
    <property type="evidence" value="ECO:0007669"/>
    <property type="project" value="InterPro"/>
</dbReference>
<dbReference type="InterPro" id="IPR017404">
    <property type="entry name" value="Ladinin_1"/>
</dbReference>
<dbReference type="PANTHER" id="PTHR12392">
    <property type="entry name" value="LADININ 1"/>
    <property type="match status" value="1"/>
</dbReference>
<dbReference type="PANTHER" id="PTHR12392:SF0">
    <property type="entry name" value="LADININ-1"/>
    <property type="match status" value="1"/>
</dbReference>
<dbReference type="PIRSF" id="PIRSF038144">
    <property type="entry name" value="Ladinin_1"/>
    <property type="match status" value="1"/>
</dbReference>
<organism>
    <name type="scientific">Mus musculus</name>
    <name type="common">Mouse</name>
    <dbReference type="NCBI Taxonomy" id="10090"/>
    <lineage>
        <taxon>Eukaryota</taxon>
        <taxon>Metazoa</taxon>
        <taxon>Chordata</taxon>
        <taxon>Craniata</taxon>
        <taxon>Vertebrata</taxon>
        <taxon>Euteleostomi</taxon>
        <taxon>Mammalia</taxon>
        <taxon>Eutheria</taxon>
        <taxon>Euarchontoglires</taxon>
        <taxon>Glires</taxon>
        <taxon>Rodentia</taxon>
        <taxon>Myomorpha</taxon>
        <taxon>Muroidea</taxon>
        <taxon>Muridae</taxon>
        <taxon>Murinae</taxon>
        <taxon>Mus</taxon>
        <taxon>Mus</taxon>
    </lineage>
</organism>
<name>LAD1_MOUSE</name>
<sequence length="528" mass="58864">MSVSRKDWSALSSLARQRTLEDEEEQERERRRRHRNLSSTTDDESPKLTQNGAQRSVERLPSVEEAEVSKPSPPASKDEDEDFQAILRTRKERRQRRQVVEAVQAPVQERPEAEEERDSLGPEQTSSQPLVPKKKVEALPRRRLSREQRGPWAQDEERLKNRELAEGEKRLPEETVAQQKTLVSEKTPVSEKTPVPAKRLVSEKACPSEKGTATEKASLTEKRHSPEKLVPEKTSVTEKSPVPEKTLVSLKTAAPERRSPPVLEKAIVSEKMQERKLVSEKASIFEKSLVSEAKLTPKKAAVSEQPQTTGGSQATTREPRGRALPDKSPPSSAEQSTPAPPTKASRFPPITLQVKIPSKDEDADTPSPTLLTYSSSLKRSSPRTISFRMSPRKDNSETPLTRSASVRLPASTVKLGEKLERYHTAIQRSESVRSPGSSRTEVLVTPAGVASKRHLFEKELSGQNRTEPTSIRKENLRLSGVVTSRLNLWISKTQDSGDHGSQEVRKEASVTKRAQWGSKPSTSLDAEV</sequence>
<evidence type="ECO:0000250" key="1">
    <source>
        <dbReference type="UniProtKB" id="O00515"/>
    </source>
</evidence>
<evidence type="ECO:0000256" key="2">
    <source>
        <dbReference type="SAM" id="MobiDB-lite"/>
    </source>
</evidence>
<evidence type="ECO:0000269" key="3">
    <source>
    </source>
</evidence>
<evidence type="ECO:0007744" key="4">
    <source>
    </source>
</evidence>
<accession>P57016</accession>
<comment type="function">
    <text evidence="3">Anchoring filament protein which is a component of the basement membrane zone.</text>
</comment>
<comment type="subcellular location">
    <subcellularLocation>
        <location evidence="3">Secreted</location>
        <location evidence="3">Extracellular space</location>
        <location evidence="3">Extracellular matrix</location>
        <location evidence="3">Basement membrane</location>
    </subcellularLocation>
</comment>
<comment type="tissue specificity">
    <text evidence="3">Expressed in kidney, lung and keratinocytes followed by liver, spleen and brain. Not expressed in testis, skeletal and heart muscle and in fibroblasts.</text>
</comment>
<feature type="chain" id="PRO_0000084350" description="Ladinin-1">
    <location>
        <begin position="1"/>
        <end position="528"/>
    </location>
</feature>
<feature type="repeat" description="SEK 1">
    <location>
        <begin position="184"/>
        <end position="186"/>
    </location>
</feature>
<feature type="repeat" description="SEK 2">
    <location>
        <begin position="190"/>
        <end position="192"/>
    </location>
</feature>
<feature type="repeat" description="SEK 3">
    <location>
        <begin position="202"/>
        <end position="204"/>
    </location>
</feature>
<feature type="repeat" description="SEK 4">
    <location>
        <begin position="208"/>
        <end position="210"/>
    </location>
</feature>
<feature type="repeat" description="SEK 5">
    <location>
        <begin position="269"/>
        <end position="271"/>
    </location>
</feature>
<feature type="repeat" description="SEK 6">
    <location>
        <begin position="279"/>
        <end position="281"/>
    </location>
</feature>
<feature type="region of interest" description="Disordered" evidence="2">
    <location>
        <begin position="1"/>
        <end position="404"/>
    </location>
</feature>
<feature type="region of interest" description="6 X SEK repeats">
    <location>
        <begin position="184"/>
        <end position="281"/>
    </location>
</feature>
<feature type="region of interest" description="Disordered" evidence="2">
    <location>
        <begin position="492"/>
        <end position="528"/>
    </location>
</feature>
<feature type="compositionally biased region" description="Basic residues" evidence="2">
    <location>
        <begin position="88"/>
        <end position="97"/>
    </location>
</feature>
<feature type="compositionally biased region" description="Basic and acidic residues" evidence="2">
    <location>
        <begin position="134"/>
        <end position="173"/>
    </location>
</feature>
<feature type="compositionally biased region" description="Basic and acidic residues" evidence="2">
    <location>
        <begin position="218"/>
        <end position="231"/>
    </location>
</feature>
<feature type="compositionally biased region" description="Basic and acidic residues" evidence="2">
    <location>
        <begin position="267"/>
        <end position="279"/>
    </location>
</feature>
<feature type="compositionally biased region" description="Polar residues" evidence="2">
    <location>
        <begin position="304"/>
        <end position="316"/>
    </location>
</feature>
<feature type="compositionally biased region" description="Low complexity" evidence="2">
    <location>
        <begin position="365"/>
        <end position="377"/>
    </location>
</feature>
<feature type="compositionally biased region" description="Basic and acidic residues" evidence="2">
    <location>
        <begin position="495"/>
        <end position="510"/>
    </location>
</feature>
<feature type="compositionally biased region" description="Polar residues" evidence="2">
    <location>
        <begin position="518"/>
        <end position="528"/>
    </location>
</feature>
<feature type="modified residue" description="Phosphoserine" evidence="4">
    <location>
        <position position="38"/>
    </location>
</feature>
<feature type="modified residue" description="Phosphoserine" evidence="4">
    <location>
        <position position="56"/>
    </location>
</feature>
<feature type="modified residue" description="Phosphoserine" evidence="4">
    <location>
        <position position="62"/>
    </location>
</feature>
<feature type="modified residue" description="Phosphoserine" evidence="4">
    <location>
        <position position="72"/>
    </location>
</feature>
<feature type="modified residue" description="Phosphoserine" evidence="4">
    <location>
        <position position="76"/>
    </location>
</feature>
<feature type="modified residue" description="Phosphoserine" evidence="1">
    <location>
        <position position="119"/>
    </location>
</feature>
<feature type="modified residue" description="Phosphoserine" evidence="4">
    <location>
        <position position="328"/>
    </location>
</feature>
<feature type="modified residue" description="Phosphoserine" evidence="4">
    <location>
        <position position="358"/>
    </location>
</feature>
<feature type="modified residue" description="Phosphoserine" evidence="4">
    <location>
        <position position="367"/>
    </location>
</feature>
<feature type="modified residue" description="Phosphoserine" evidence="1">
    <location>
        <position position="405"/>
    </location>
</feature>
<feature type="modified residue" description="Phosphoserine" evidence="1">
    <location>
        <position position="496"/>
    </location>
</feature>